<gene>
    <name evidence="1" type="primary">pgk</name>
    <name type="ordered locus">PsycPRwf_1426</name>
</gene>
<accession>A5WFD0</accession>
<keyword id="KW-0067">ATP-binding</keyword>
<keyword id="KW-0963">Cytoplasm</keyword>
<keyword id="KW-0324">Glycolysis</keyword>
<keyword id="KW-0418">Kinase</keyword>
<keyword id="KW-0547">Nucleotide-binding</keyword>
<keyword id="KW-0808">Transferase</keyword>
<reference key="1">
    <citation type="submission" date="2007-05" db="EMBL/GenBank/DDBJ databases">
        <title>Complete sequence of chromosome of Psychrobacter sp. PRwf-1.</title>
        <authorList>
            <consortium name="US DOE Joint Genome Institute"/>
            <person name="Copeland A."/>
            <person name="Lucas S."/>
            <person name="Lapidus A."/>
            <person name="Barry K."/>
            <person name="Detter J.C."/>
            <person name="Glavina del Rio T."/>
            <person name="Hammon N."/>
            <person name="Israni S."/>
            <person name="Dalin E."/>
            <person name="Tice H."/>
            <person name="Pitluck S."/>
            <person name="Chain P."/>
            <person name="Malfatti S."/>
            <person name="Shin M."/>
            <person name="Vergez L."/>
            <person name="Schmutz J."/>
            <person name="Larimer F."/>
            <person name="Land M."/>
            <person name="Hauser L."/>
            <person name="Kyrpides N."/>
            <person name="Kim E."/>
            <person name="Tiedje J."/>
            <person name="Richardson P."/>
        </authorList>
    </citation>
    <scope>NUCLEOTIDE SEQUENCE [LARGE SCALE GENOMIC DNA]</scope>
    <source>
        <strain>PRwf-1</strain>
    </source>
</reference>
<name>PGK_PSYWF</name>
<protein>
    <recommendedName>
        <fullName evidence="1">Phosphoglycerate kinase</fullName>
        <ecNumber evidence="1">2.7.2.3</ecNumber>
    </recommendedName>
</protein>
<comment type="catalytic activity">
    <reaction evidence="1">
        <text>(2R)-3-phosphoglycerate + ATP = (2R)-3-phospho-glyceroyl phosphate + ADP</text>
        <dbReference type="Rhea" id="RHEA:14801"/>
        <dbReference type="ChEBI" id="CHEBI:30616"/>
        <dbReference type="ChEBI" id="CHEBI:57604"/>
        <dbReference type="ChEBI" id="CHEBI:58272"/>
        <dbReference type="ChEBI" id="CHEBI:456216"/>
        <dbReference type="EC" id="2.7.2.3"/>
    </reaction>
</comment>
<comment type="pathway">
    <text evidence="1">Carbohydrate degradation; glycolysis; pyruvate from D-glyceraldehyde 3-phosphate: step 2/5.</text>
</comment>
<comment type="subunit">
    <text evidence="1">Monomer.</text>
</comment>
<comment type="subcellular location">
    <subcellularLocation>
        <location evidence="1">Cytoplasm</location>
    </subcellularLocation>
</comment>
<comment type="similarity">
    <text evidence="1">Belongs to the phosphoglycerate kinase family.</text>
</comment>
<evidence type="ECO:0000255" key="1">
    <source>
        <dbReference type="HAMAP-Rule" id="MF_00145"/>
    </source>
</evidence>
<organism>
    <name type="scientific">Psychrobacter sp. (strain PRwf-1)</name>
    <dbReference type="NCBI Taxonomy" id="349106"/>
    <lineage>
        <taxon>Bacteria</taxon>
        <taxon>Pseudomonadati</taxon>
        <taxon>Pseudomonadota</taxon>
        <taxon>Gammaproteobacteria</taxon>
        <taxon>Moraxellales</taxon>
        <taxon>Moraxellaceae</taxon>
        <taxon>Psychrobacter</taxon>
    </lineage>
</organism>
<feature type="chain" id="PRO_1000071473" description="Phosphoglycerate kinase">
    <location>
        <begin position="1"/>
        <end position="402"/>
    </location>
</feature>
<feature type="binding site" evidence="1">
    <location>
        <begin position="21"/>
        <end position="23"/>
    </location>
    <ligand>
        <name>substrate</name>
    </ligand>
</feature>
<feature type="binding site" evidence="1">
    <location>
        <position position="36"/>
    </location>
    <ligand>
        <name>substrate</name>
    </ligand>
</feature>
<feature type="binding site" evidence="1">
    <location>
        <begin position="59"/>
        <end position="62"/>
    </location>
    <ligand>
        <name>substrate</name>
    </ligand>
</feature>
<feature type="binding site" evidence="1">
    <location>
        <position position="114"/>
    </location>
    <ligand>
        <name>substrate</name>
    </ligand>
</feature>
<feature type="binding site" evidence="1">
    <location>
        <position position="147"/>
    </location>
    <ligand>
        <name>substrate</name>
    </ligand>
</feature>
<feature type="binding site" evidence="1">
    <location>
        <position position="202"/>
    </location>
    <ligand>
        <name>ATP</name>
        <dbReference type="ChEBI" id="CHEBI:30616"/>
    </ligand>
</feature>
<feature type="binding site" evidence="1">
    <location>
        <position position="329"/>
    </location>
    <ligand>
        <name>ATP</name>
        <dbReference type="ChEBI" id="CHEBI:30616"/>
    </ligand>
</feature>
<feature type="binding site" evidence="1">
    <location>
        <begin position="355"/>
        <end position="358"/>
    </location>
    <ligand>
        <name>ATP</name>
        <dbReference type="ChEBI" id="CHEBI:30616"/>
    </ligand>
</feature>
<dbReference type="EC" id="2.7.2.3" evidence="1"/>
<dbReference type="EMBL" id="CP000713">
    <property type="protein sequence ID" value="ABQ94371.1"/>
    <property type="molecule type" value="Genomic_DNA"/>
</dbReference>
<dbReference type="SMR" id="A5WFD0"/>
<dbReference type="STRING" id="349106.PsycPRwf_1426"/>
<dbReference type="KEGG" id="prw:PsycPRwf_1426"/>
<dbReference type="eggNOG" id="COG0126">
    <property type="taxonomic scope" value="Bacteria"/>
</dbReference>
<dbReference type="HOGENOM" id="CLU_025427_0_2_6"/>
<dbReference type="UniPathway" id="UPA00109">
    <property type="reaction ID" value="UER00185"/>
</dbReference>
<dbReference type="GO" id="GO:0005829">
    <property type="term" value="C:cytosol"/>
    <property type="evidence" value="ECO:0007669"/>
    <property type="project" value="TreeGrafter"/>
</dbReference>
<dbReference type="GO" id="GO:0043531">
    <property type="term" value="F:ADP binding"/>
    <property type="evidence" value="ECO:0007669"/>
    <property type="project" value="TreeGrafter"/>
</dbReference>
<dbReference type="GO" id="GO:0005524">
    <property type="term" value="F:ATP binding"/>
    <property type="evidence" value="ECO:0007669"/>
    <property type="project" value="UniProtKB-KW"/>
</dbReference>
<dbReference type="GO" id="GO:0004618">
    <property type="term" value="F:phosphoglycerate kinase activity"/>
    <property type="evidence" value="ECO:0007669"/>
    <property type="project" value="UniProtKB-UniRule"/>
</dbReference>
<dbReference type="GO" id="GO:0006094">
    <property type="term" value="P:gluconeogenesis"/>
    <property type="evidence" value="ECO:0007669"/>
    <property type="project" value="TreeGrafter"/>
</dbReference>
<dbReference type="GO" id="GO:0006096">
    <property type="term" value="P:glycolytic process"/>
    <property type="evidence" value="ECO:0007669"/>
    <property type="project" value="UniProtKB-UniRule"/>
</dbReference>
<dbReference type="FunFam" id="3.40.50.1260:FF:000001">
    <property type="entry name" value="Phosphoglycerate kinase"/>
    <property type="match status" value="1"/>
</dbReference>
<dbReference type="FunFam" id="3.40.50.1260:FF:000002">
    <property type="entry name" value="Phosphoglycerate kinase"/>
    <property type="match status" value="1"/>
</dbReference>
<dbReference type="Gene3D" id="3.40.50.1260">
    <property type="entry name" value="Phosphoglycerate kinase, N-terminal domain"/>
    <property type="match status" value="2"/>
</dbReference>
<dbReference type="HAMAP" id="MF_00145">
    <property type="entry name" value="Phosphoglyc_kinase"/>
    <property type="match status" value="1"/>
</dbReference>
<dbReference type="InterPro" id="IPR001576">
    <property type="entry name" value="Phosphoglycerate_kinase"/>
</dbReference>
<dbReference type="InterPro" id="IPR015911">
    <property type="entry name" value="Phosphoglycerate_kinase_CS"/>
</dbReference>
<dbReference type="InterPro" id="IPR015824">
    <property type="entry name" value="Phosphoglycerate_kinase_N"/>
</dbReference>
<dbReference type="InterPro" id="IPR036043">
    <property type="entry name" value="Phosphoglycerate_kinase_sf"/>
</dbReference>
<dbReference type="PANTHER" id="PTHR11406">
    <property type="entry name" value="PHOSPHOGLYCERATE KINASE"/>
    <property type="match status" value="1"/>
</dbReference>
<dbReference type="PANTHER" id="PTHR11406:SF23">
    <property type="entry name" value="PHOSPHOGLYCERATE KINASE 1, CHLOROPLASTIC-RELATED"/>
    <property type="match status" value="1"/>
</dbReference>
<dbReference type="Pfam" id="PF00162">
    <property type="entry name" value="PGK"/>
    <property type="match status" value="1"/>
</dbReference>
<dbReference type="PIRSF" id="PIRSF000724">
    <property type="entry name" value="Pgk"/>
    <property type="match status" value="1"/>
</dbReference>
<dbReference type="PRINTS" id="PR00477">
    <property type="entry name" value="PHGLYCKINASE"/>
</dbReference>
<dbReference type="SUPFAM" id="SSF53748">
    <property type="entry name" value="Phosphoglycerate kinase"/>
    <property type="match status" value="1"/>
</dbReference>
<dbReference type="PROSITE" id="PS00111">
    <property type="entry name" value="PGLYCERATE_KINASE"/>
    <property type="match status" value="1"/>
</dbReference>
<sequence>MNFARMENQDLSGKTVLIREDLNVPVQNGKISNDARLQSSLPTIKLALEKGAAVLVCSHLGRPTEGDYEEKYSLQPVADYLSEHLNQPVRLDKTYTEQEVTVAPGDVVLLENVRFNVGEKKNSDSLSQHYADLCDVFVMDAFGTAHRAQASTEGVIQAAAKAGKVVCAGPLLAAELDALDKALHKPKKPLVAIVGGSKVSTKLDVLISLAKICDQIIVGGGIANTFIAAQGHSVGASLYEAEMIDTAKQIMQQTDILLPKNVVVADKNQINFDDFLNSLESATPIHRSIEQVGEDEMILDIASEGAEHIFEAVKNAATILWNGPVGVFEVEAFSEGTRLLSEAVKDSAGFSIAGGGDTLAAIHKFNVEDGVSYMSTGGGAFLEFVEGKTLPAVAALEANHSK</sequence>
<proteinExistence type="inferred from homology"/>